<feature type="chain" id="PRO_0000232386" description="Mitochondrial carrier homolog 1">
    <location>
        <begin position="1"/>
        <end position="389"/>
    </location>
</feature>
<feature type="topological domain" description="Mitochondrial intermembrane" evidence="8">
    <location>
        <begin position="1"/>
        <end position="93"/>
    </location>
</feature>
<feature type="transmembrane region" description="Helical; Name=1" evidence="3">
    <location>
        <begin position="94"/>
        <end position="104"/>
    </location>
</feature>
<feature type="topological domain" description="Cytoplasmic" evidence="8">
    <location>
        <begin position="105"/>
        <end position="155"/>
    </location>
</feature>
<feature type="transmembrane region" description="Helical; Name=2" evidence="3">
    <location>
        <begin position="156"/>
        <end position="176"/>
    </location>
</feature>
<feature type="topological domain" description="Mitochondrial intermembrane" evidence="8">
    <location>
        <begin position="177"/>
        <end position="209"/>
    </location>
</feature>
<feature type="transmembrane region" description="Helical; Name=3" evidence="3">
    <location>
        <begin position="210"/>
        <end position="229"/>
    </location>
</feature>
<feature type="topological domain" description="Cytoplasmic" evidence="8">
    <location>
        <begin position="230"/>
        <end position="254"/>
    </location>
</feature>
<feature type="transmembrane region" description="Helical; Name=4" evidence="3">
    <location>
        <begin position="255"/>
        <end position="279"/>
    </location>
</feature>
<feature type="topological domain" description="Mitochondrial intermembrane" evidence="8">
    <location>
        <begin position="280"/>
        <end position="322"/>
    </location>
</feature>
<feature type="transmembrane region" description="Helical; Name=5" evidence="3">
    <location>
        <begin position="323"/>
        <end position="342"/>
    </location>
</feature>
<feature type="topological domain" description="Cytoplasmic" evidence="8">
    <location>
        <begin position="343"/>
        <end position="371"/>
    </location>
</feature>
<feature type="transmembrane region" description="Helical; Name=6" evidence="3">
    <location>
        <begin position="372"/>
        <end position="389"/>
    </location>
</feature>
<feature type="repeat" description="Solcar 1">
    <location>
        <begin position="81"/>
        <end position="176"/>
    </location>
</feature>
<feature type="repeat" description="Solcar 2">
    <location>
        <begin position="192"/>
        <end position="280"/>
    </location>
</feature>
<feature type="region of interest" description="Disordered" evidence="4">
    <location>
        <begin position="1"/>
        <end position="78"/>
    </location>
</feature>
<feature type="compositionally biased region" description="Gly residues" evidence="4">
    <location>
        <begin position="15"/>
        <end position="33"/>
    </location>
</feature>
<feature type="modified residue" description="Omega-N-methylarginine" evidence="9">
    <location>
        <position position="29"/>
    </location>
</feature>
<feature type="splice variant" id="VSP_017883" description="In isoform 2." evidence="5 6 7">
    <location>
        <begin position="286"/>
        <end position="302"/>
    </location>
</feature>
<feature type="sequence conflict" description="In Ref. 3; BAE32313." evidence="8" ref="3">
    <original>P</original>
    <variation>A</variation>
    <location>
        <position position="10"/>
    </location>
</feature>
<feature type="sequence conflict" description="In Ref. 3; BAE32313." evidence="8" ref="3">
    <original>A</original>
    <variation>G</variation>
    <location>
        <position position="46"/>
    </location>
</feature>
<evidence type="ECO:0000250" key="1">
    <source>
        <dbReference type="UniProtKB" id="Q9NZJ7"/>
    </source>
</evidence>
<evidence type="ECO:0000250" key="2">
    <source>
        <dbReference type="UniProtKB" id="Q9Y6C9"/>
    </source>
</evidence>
<evidence type="ECO:0000255" key="3"/>
<evidence type="ECO:0000256" key="4">
    <source>
        <dbReference type="SAM" id="MobiDB-lite"/>
    </source>
</evidence>
<evidence type="ECO:0000303" key="5">
    <source>
    </source>
</evidence>
<evidence type="ECO:0000303" key="6">
    <source>
    </source>
</evidence>
<evidence type="ECO:0000303" key="7">
    <source ref="1"/>
</evidence>
<evidence type="ECO:0000305" key="8"/>
<evidence type="ECO:0007744" key="9">
    <source>
    </source>
</evidence>
<sequence length="389" mass="41565">MGASDPEVAPWAPGGAAGMAGAGAGAGARGGAPAGVEARARDPPPAHRAHPRHPRPAAQPSARRMDGGPGAPGSGDNAPTTEALFVALGAGVTALSHPLLYVKLLIQVGHEPMPPTLGTNVLGRKVLYLPSFFTYAKYIVQVDGKIGLFRGLSPRLMSNALSTVTRGSMKKVFPPDEMEQVSNKDDMKTSLKKVVKETSYEMMMQCVSRMLAHPLHVISMRCMVQFVGREAKYSGVLSSIGKIFKEEGLLGFFVGLIPHLLGDVVFLWGCNLLAHFINAYLVDDSVSDTPGGLGNDQNPGSQFSQALAIRSYTKFVMGIAVSMLTYPFLLVGDLMAVNNCGLRAGLPPYSPVFKSWIHCWKYLSVQGQLFRGSSLLFRRVSSGSCFALE</sequence>
<gene>
    <name type="primary">Mtch1</name>
</gene>
<organism>
    <name type="scientific">Mus musculus</name>
    <name type="common">Mouse</name>
    <dbReference type="NCBI Taxonomy" id="10090"/>
    <lineage>
        <taxon>Eukaryota</taxon>
        <taxon>Metazoa</taxon>
        <taxon>Chordata</taxon>
        <taxon>Craniata</taxon>
        <taxon>Vertebrata</taxon>
        <taxon>Euteleostomi</taxon>
        <taxon>Mammalia</taxon>
        <taxon>Eutheria</taxon>
        <taxon>Euarchontoglires</taxon>
        <taxon>Glires</taxon>
        <taxon>Rodentia</taxon>
        <taxon>Myomorpha</taxon>
        <taxon>Muroidea</taxon>
        <taxon>Muridae</taxon>
        <taxon>Murinae</taxon>
        <taxon>Mus</taxon>
        <taxon>Mus</taxon>
    </lineage>
</organism>
<proteinExistence type="evidence at protein level"/>
<dbReference type="EMBL" id="AB040292">
    <property type="protein sequence ID" value="BAA92860.1"/>
    <property type="molecule type" value="Genomic_DNA"/>
</dbReference>
<dbReference type="EMBL" id="AB040292">
    <property type="protein sequence ID" value="BAA92861.1"/>
    <property type="molecule type" value="Genomic_DNA"/>
</dbReference>
<dbReference type="EMBL" id="AF176007">
    <property type="protein sequence ID" value="AAD52645.2"/>
    <property type="molecule type" value="mRNA"/>
</dbReference>
<dbReference type="EMBL" id="AF192558">
    <property type="protein sequence ID" value="AAF12792.2"/>
    <property type="molecule type" value="mRNA"/>
</dbReference>
<dbReference type="EMBL" id="AY301264">
    <property type="protein sequence ID" value="AAP45196.1"/>
    <property type="molecule type" value="Genomic_DNA"/>
</dbReference>
<dbReference type="EMBL" id="AY301264">
    <property type="protein sequence ID" value="AAP45202.1"/>
    <property type="molecule type" value="Genomic_DNA"/>
</dbReference>
<dbReference type="EMBL" id="AK154010">
    <property type="protein sequence ID" value="BAE32313.1"/>
    <property type="status" value="ALT_INIT"/>
    <property type="molecule type" value="mRNA"/>
</dbReference>
<dbReference type="EMBL" id="BC023135">
    <property type="protein sequence ID" value="AAH23135.1"/>
    <property type="status" value="ALT_INIT"/>
    <property type="molecule type" value="mRNA"/>
</dbReference>
<dbReference type="EMBL" id="BC026436">
    <property type="protein sequence ID" value="AAH26436.1"/>
    <property type="status" value="ALT_INIT"/>
    <property type="molecule type" value="mRNA"/>
</dbReference>
<dbReference type="EMBL" id="BC027274">
    <property type="protein sequence ID" value="AAH27274.1"/>
    <property type="status" value="ALT_INIT"/>
    <property type="molecule type" value="mRNA"/>
</dbReference>
<dbReference type="CCDS" id="CCDS28596.1">
    <molecule id="Q791T5-1"/>
</dbReference>
<dbReference type="CCDS" id="CCDS84288.1">
    <molecule id="Q791T5-2"/>
</dbReference>
<dbReference type="RefSeq" id="NP_001334264.1">
    <molecule id="Q791T5-2"/>
    <property type="nucleotide sequence ID" value="NM_001347335.1"/>
</dbReference>
<dbReference type="RefSeq" id="NP_063933.1">
    <molecule id="Q791T5-1"/>
    <property type="nucleotide sequence ID" value="NM_019880.4"/>
</dbReference>
<dbReference type="RefSeq" id="XP_006524731.1">
    <molecule id="Q791T5-1"/>
    <property type="nucleotide sequence ID" value="XM_006524668.2"/>
</dbReference>
<dbReference type="RefSeq" id="XP_006524733.1">
    <molecule id="Q791T5-2"/>
    <property type="nucleotide sequence ID" value="XM_006524670.3"/>
</dbReference>
<dbReference type="BioGRID" id="208001">
    <property type="interactions" value="3"/>
</dbReference>
<dbReference type="FunCoup" id="Q791T5">
    <property type="interactions" value="3153"/>
</dbReference>
<dbReference type="STRING" id="10090.ENSMUSP00000093077"/>
<dbReference type="GlyGen" id="Q791T5">
    <property type="glycosylation" value="1 site, 1 O-linked glycan (1 site)"/>
</dbReference>
<dbReference type="iPTMnet" id="Q791T5"/>
<dbReference type="PhosphoSitePlus" id="Q791T5"/>
<dbReference type="SwissPalm" id="Q791T5"/>
<dbReference type="jPOST" id="Q791T5"/>
<dbReference type="PaxDb" id="10090-ENSMUSP00000093077"/>
<dbReference type="PeptideAtlas" id="Q791T5"/>
<dbReference type="ProteomicsDB" id="287624">
    <molecule id="Q791T5-1"/>
</dbReference>
<dbReference type="ProteomicsDB" id="287625">
    <molecule id="Q791T5-2"/>
</dbReference>
<dbReference type="Pumba" id="Q791T5"/>
<dbReference type="Antibodypedia" id="3010">
    <property type="antibodies" value="144 antibodies from 25 providers"/>
</dbReference>
<dbReference type="DNASU" id="56462"/>
<dbReference type="Ensembl" id="ENSMUST00000095427.12">
    <molecule id="Q791T5-1"/>
    <property type="protein sequence ID" value="ENSMUSP00000093077.5"/>
    <property type="gene ID" value="ENSMUSG00000024012.19"/>
</dbReference>
<dbReference type="Ensembl" id="ENSMUST00000118366.9">
    <molecule id="Q791T5-2"/>
    <property type="protein sequence ID" value="ENSMUSP00000113021.2"/>
    <property type="gene ID" value="ENSMUSG00000024012.19"/>
</dbReference>
<dbReference type="GeneID" id="56462"/>
<dbReference type="KEGG" id="mmu:56462"/>
<dbReference type="UCSC" id="uc008bst.1">
    <molecule id="Q791T5-1"/>
    <property type="organism name" value="mouse"/>
</dbReference>
<dbReference type="UCSC" id="uc008bsu.1">
    <molecule id="Q791T5-2"/>
    <property type="organism name" value="mouse"/>
</dbReference>
<dbReference type="AGR" id="MGI:1929261"/>
<dbReference type="CTD" id="23787"/>
<dbReference type="MGI" id="MGI:1929261">
    <property type="gene designation" value="Mtch1"/>
</dbReference>
<dbReference type="VEuPathDB" id="HostDB:ENSMUSG00000024012"/>
<dbReference type="eggNOG" id="KOG2745">
    <property type="taxonomic scope" value="Eukaryota"/>
</dbReference>
<dbReference type="GeneTree" id="ENSGT00390000000020"/>
<dbReference type="HOGENOM" id="CLU_058300_1_0_1"/>
<dbReference type="InParanoid" id="Q791T5"/>
<dbReference type="OMA" id="TSHEMVM"/>
<dbReference type="OrthoDB" id="10253709at2759"/>
<dbReference type="PhylomeDB" id="Q791T5"/>
<dbReference type="TreeFam" id="TF313721"/>
<dbReference type="BioGRID-ORCS" id="56462">
    <property type="hits" value="5 hits in 78 CRISPR screens"/>
</dbReference>
<dbReference type="CD-CODE" id="CE726F99">
    <property type="entry name" value="Postsynaptic density"/>
</dbReference>
<dbReference type="ChiTaRS" id="Mtch1">
    <property type="organism name" value="mouse"/>
</dbReference>
<dbReference type="PRO" id="PR:Q791T5"/>
<dbReference type="Proteomes" id="UP000000589">
    <property type="component" value="Chromosome 17"/>
</dbReference>
<dbReference type="RNAct" id="Q791T5">
    <property type="molecule type" value="protein"/>
</dbReference>
<dbReference type="Bgee" id="ENSMUSG00000024012">
    <property type="expression patterns" value="Expressed in saccule of membranous labyrinth and 267 other cell types or tissues"/>
</dbReference>
<dbReference type="ExpressionAtlas" id="Q791T5">
    <property type="expression patterns" value="baseline and differential"/>
</dbReference>
<dbReference type="GO" id="GO:0005741">
    <property type="term" value="C:mitochondrial outer membrane"/>
    <property type="evidence" value="ECO:0007669"/>
    <property type="project" value="UniProtKB-SubCell"/>
</dbReference>
<dbReference type="GO" id="GO:0005739">
    <property type="term" value="C:mitochondrion"/>
    <property type="evidence" value="ECO:0007005"/>
    <property type="project" value="MGI"/>
</dbReference>
<dbReference type="GO" id="GO:0032977">
    <property type="term" value="F:membrane insertase activity"/>
    <property type="evidence" value="ECO:0000250"/>
    <property type="project" value="UniProtKB"/>
</dbReference>
<dbReference type="GO" id="GO:0006915">
    <property type="term" value="P:apoptotic process"/>
    <property type="evidence" value="ECO:0007669"/>
    <property type="project" value="UniProtKB-KW"/>
</dbReference>
<dbReference type="GO" id="GO:0043065">
    <property type="term" value="P:positive regulation of apoptotic process"/>
    <property type="evidence" value="ECO:0000250"/>
    <property type="project" value="UniProtKB"/>
</dbReference>
<dbReference type="GO" id="GO:0045040">
    <property type="term" value="P:protein insertion into mitochondrial outer membrane"/>
    <property type="evidence" value="ECO:0000250"/>
    <property type="project" value="UniProtKB"/>
</dbReference>
<dbReference type="FunFam" id="1.50.40.10:FF:000022">
    <property type="entry name" value="mitochondrial carrier homolog 1 isoform X1"/>
    <property type="match status" value="1"/>
</dbReference>
<dbReference type="Gene3D" id="1.50.40.10">
    <property type="entry name" value="Mitochondrial carrier domain"/>
    <property type="match status" value="1"/>
</dbReference>
<dbReference type="InterPro" id="IPR018108">
    <property type="entry name" value="Mitochondrial_sb/sol_carrier"/>
</dbReference>
<dbReference type="InterPro" id="IPR023395">
    <property type="entry name" value="Mt_carrier_dom_sf"/>
</dbReference>
<dbReference type="PANTHER" id="PTHR10780">
    <property type="entry name" value="MITOCHONDRIAL CARRIER HOMOLOG"/>
    <property type="match status" value="1"/>
</dbReference>
<dbReference type="PANTHER" id="PTHR10780:SF3">
    <property type="entry name" value="MITOCHONDRIAL CARRIER HOMOLOG 1"/>
    <property type="match status" value="1"/>
</dbReference>
<dbReference type="Pfam" id="PF00153">
    <property type="entry name" value="Mito_carr"/>
    <property type="match status" value="1"/>
</dbReference>
<dbReference type="SUPFAM" id="SSF103506">
    <property type="entry name" value="Mitochondrial carrier"/>
    <property type="match status" value="1"/>
</dbReference>
<dbReference type="PROSITE" id="PS50920">
    <property type="entry name" value="SOLCAR"/>
    <property type="match status" value="2"/>
</dbReference>
<reference key="1">
    <citation type="submission" date="1999-10" db="EMBL/GenBank/DDBJ databases">
        <title>Evolutionarily conserved mitochondrial carrier gene family in mouse, human, and zebrafish.</title>
        <authorList>
            <person name="Jang J.S."/>
            <person name="Hahn Y."/>
            <person name="Park C."/>
            <person name="Chung J.H."/>
        </authorList>
    </citation>
    <scope>NUCLEOTIDE SEQUENCE [GENOMIC DNA / MRNA] (ISOFORMS 1 AND 2)</scope>
</reference>
<reference key="2">
    <citation type="submission" date="2003-05" db="EMBL/GenBank/DDBJ databases">
        <title>Genomic sequence analysis in the mouse T-complex region.</title>
        <authorList>
            <person name="Brathwaite M.E."/>
            <person name="Waeltz P."/>
            <person name="Qian Y."/>
            <person name="Dudekula D."/>
            <person name="Schlessinger D."/>
            <person name="Nagaraja R."/>
        </authorList>
    </citation>
    <scope>NUCLEOTIDE SEQUENCE [LARGE SCALE GENOMIC DNA]</scope>
    <source>
        <strain>C57BL/6J</strain>
    </source>
</reference>
<reference key="3">
    <citation type="journal article" date="2005" name="Science">
        <title>The transcriptional landscape of the mammalian genome.</title>
        <authorList>
            <person name="Carninci P."/>
            <person name="Kasukawa T."/>
            <person name="Katayama S."/>
            <person name="Gough J."/>
            <person name="Frith M.C."/>
            <person name="Maeda N."/>
            <person name="Oyama R."/>
            <person name="Ravasi T."/>
            <person name="Lenhard B."/>
            <person name="Wells C."/>
            <person name="Kodzius R."/>
            <person name="Shimokawa K."/>
            <person name="Bajic V.B."/>
            <person name="Brenner S.E."/>
            <person name="Batalov S."/>
            <person name="Forrest A.R."/>
            <person name="Zavolan M."/>
            <person name="Davis M.J."/>
            <person name="Wilming L.G."/>
            <person name="Aidinis V."/>
            <person name="Allen J.E."/>
            <person name="Ambesi-Impiombato A."/>
            <person name="Apweiler R."/>
            <person name="Aturaliya R.N."/>
            <person name="Bailey T.L."/>
            <person name="Bansal M."/>
            <person name="Baxter L."/>
            <person name="Beisel K.W."/>
            <person name="Bersano T."/>
            <person name="Bono H."/>
            <person name="Chalk A.M."/>
            <person name="Chiu K.P."/>
            <person name="Choudhary V."/>
            <person name="Christoffels A."/>
            <person name="Clutterbuck D.R."/>
            <person name="Crowe M.L."/>
            <person name="Dalla E."/>
            <person name="Dalrymple B.P."/>
            <person name="de Bono B."/>
            <person name="Della Gatta G."/>
            <person name="di Bernardo D."/>
            <person name="Down T."/>
            <person name="Engstrom P."/>
            <person name="Fagiolini M."/>
            <person name="Faulkner G."/>
            <person name="Fletcher C.F."/>
            <person name="Fukushima T."/>
            <person name="Furuno M."/>
            <person name="Futaki S."/>
            <person name="Gariboldi M."/>
            <person name="Georgii-Hemming P."/>
            <person name="Gingeras T.R."/>
            <person name="Gojobori T."/>
            <person name="Green R.E."/>
            <person name="Gustincich S."/>
            <person name="Harbers M."/>
            <person name="Hayashi Y."/>
            <person name="Hensch T.K."/>
            <person name="Hirokawa N."/>
            <person name="Hill D."/>
            <person name="Huminiecki L."/>
            <person name="Iacono M."/>
            <person name="Ikeo K."/>
            <person name="Iwama A."/>
            <person name="Ishikawa T."/>
            <person name="Jakt M."/>
            <person name="Kanapin A."/>
            <person name="Katoh M."/>
            <person name="Kawasawa Y."/>
            <person name="Kelso J."/>
            <person name="Kitamura H."/>
            <person name="Kitano H."/>
            <person name="Kollias G."/>
            <person name="Krishnan S.P."/>
            <person name="Kruger A."/>
            <person name="Kummerfeld S.K."/>
            <person name="Kurochkin I.V."/>
            <person name="Lareau L.F."/>
            <person name="Lazarevic D."/>
            <person name="Lipovich L."/>
            <person name="Liu J."/>
            <person name="Liuni S."/>
            <person name="McWilliam S."/>
            <person name="Madan Babu M."/>
            <person name="Madera M."/>
            <person name="Marchionni L."/>
            <person name="Matsuda H."/>
            <person name="Matsuzawa S."/>
            <person name="Miki H."/>
            <person name="Mignone F."/>
            <person name="Miyake S."/>
            <person name="Morris K."/>
            <person name="Mottagui-Tabar S."/>
            <person name="Mulder N."/>
            <person name="Nakano N."/>
            <person name="Nakauchi H."/>
            <person name="Ng P."/>
            <person name="Nilsson R."/>
            <person name="Nishiguchi S."/>
            <person name="Nishikawa S."/>
            <person name="Nori F."/>
            <person name="Ohara O."/>
            <person name="Okazaki Y."/>
            <person name="Orlando V."/>
            <person name="Pang K.C."/>
            <person name="Pavan W.J."/>
            <person name="Pavesi G."/>
            <person name="Pesole G."/>
            <person name="Petrovsky N."/>
            <person name="Piazza S."/>
            <person name="Reed J."/>
            <person name="Reid J.F."/>
            <person name="Ring B.Z."/>
            <person name="Ringwald M."/>
            <person name="Rost B."/>
            <person name="Ruan Y."/>
            <person name="Salzberg S.L."/>
            <person name="Sandelin A."/>
            <person name="Schneider C."/>
            <person name="Schoenbach C."/>
            <person name="Sekiguchi K."/>
            <person name="Semple C.A."/>
            <person name="Seno S."/>
            <person name="Sessa L."/>
            <person name="Sheng Y."/>
            <person name="Shibata Y."/>
            <person name="Shimada H."/>
            <person name="Shimada K."/>
            <person name="Silva D."/>
            <person name="Sinclair B."/>
            <person name="Sperling S."/>
            <person name="Stupka E."/>
            <person name="Sugiura K."/>
            <person name="Sultana R."/>
            <person name="Takenaka Y."/>
            <person name="Taki K."/>
            <person name="Tammoja K."/>
            <person name="Tan S.L."/>
            <person name="Tang S."/>
            <person name="Taylor M.S."/>
            <person name="Tegner J."/>
            <person name="Teichmann S.A."/>
            <person name="Ueda H.R."/>
            <person name="van Nimwegen E."/>
            <person name="Verardo R."/>
            <person name="Wei C.L."/>
            <person name="Yagi K."/>
            <person name="Yamanishi H."/>
            <person name="Zabarovsky E."/>
            <person name="Zhu S."/>
            <person name="Zimmer A."/>
            <person name="Hide W."/>
            <person name="Bult C."/>
            <person name="Grimmond S.M."/>
            <person name="Teasdale R.D."/>
            <person name="Liu E.T."/>
            <person name="Brusic V."/>
            <person name="Quackenbush J."/>
            <person name="Wahlestedt C."/>
            <person name="Mattick J.S."/>
            <person name="Hume D.A."/>
            <person name="Kai C."/>
            <person name="Sasaki D."/>
            <person name="Tomaru Y."/>
            <person name="Fukuda S."/>
            <person name="Kanamori-Katayama M."/>
            <person name="Suzuki M."/>
            <person name="Aoki J."/>
            <person name="Arakawa T."/>
            <person name="Iida J."/>
            <person name="Imamura K."/>
            <person name="Itoh M."/>
            <person name="Kato T."/>
            <person name="Kawaji H."/>
            <person name="Kawagashira N."/>
            <person name="Kawashima T."/>
            <person name="Kojima M."/>
            <person name="Kondo S."/>
            <person name="Konno H."/>
            <person name="Nakano K."/>
            <person name="Ninomiya N."/>
            <person name="Nishio T."/>
            <person name="Okada M."/>
            <person name="Plessy C."/>
            <person name="Shibata K."/>
            <person name="Shiraki T."/>
            <person name="Suzuki S."/>
            <person name="Tagami M."/>
            <person name="Waki K."/>
            <person name="Watahiki A."/>
            <person name="Okamura-Oho Y."/>
            <person name="Suzuki H."/>
            <person name="Kawai J."/>
            <person name="Hayashizaki Y."/>
        </authorList>
    </citation>
    <scope>NUCLEOTIDE SEQUENCE [LARGE SCALE MRNA] OF 10-389 (ISOFORM 2)</scope>
    <source>
        <strain>NOD</strain>
        <tissue>Thymus</tissue>
    </source>
</reference>
<reference key="4">
    <citation type="journal article" date="2004" name="Genome Res.">
        <title>The status, quality, and expansion of the NIH full-length cDNA project: the Mammalian Gene Collection (MGC).</title>
        <authorList>
            <consortium name="The MGC Project Team"/>
        </authorList>
    </citation>
    <scope>NUCLEOTIDE SEQUENCE [LARGE SCALE MRNA] OF 15-389 (ISOFORM 1)</scope>
    <scope>NUCLEOTIDE SEQUENCE [LARGE SCALE MRNA] OF 13-389 (ISOFORM 2)</scope>
    <source>
        <strain>FVB/N</strain>
        <tissue>Kidney</tissue>
        <tissue>Mammary gland</tissue>
    </source>
</reference>
<reference key="5">
    <citation type="journal article" date="2010" name="Cell">
        <title>A tissue-specific atlas of mouse protein phosphorylation and expression.</title>
        <authorList>
            <person name="Huttlin E.L."/>
            <person name="Jedrychowski M.P."/>
            <person name="Elias J.E."/>
            <person name="Goswami T."/>
            <person name="Rad R."/>
            <person name="Beausoleil S.A."/>
            <person name="Villen J."/>
            <person name="Haas W."/>
            <person name="Sowa M.E."/>
            <person name="Gygi S.P."/>
        </authorList>
    </citation>
    <scope>IDENTIFICATION BY MASS SPECTROMETRY [LARGE SCALE ANALYSIS]</scope>
    <source>
        <tissue>Brown adipose tissue</tissue>
        <tissue>Heart</tissue>
        <tissue>Kidney</tissue>
        <tissue>Lung</tissue>
    </source>
</reference>
<reference key="6">
    <citation type="journal article" date="2014" name="Mol. Cell. Proteomics">
        <title>Immunoaffinity enrichment and mass spectrometry analysis of protein methylation.</title>
        <authorList>
            <person name="Guo A."/>
            <person name="Gu H."/>
            <person name="Zhou J."/>
            <person name="Mulhern D."/>
            <person name="Wang Y."/>
            <person name="Lee K.A."/>
            <person name="Yang V."/>
            <person name="Aguiar M."/>
            <person name="Kornhauser J."/>
            <person name="Jia X."/>
            <person name="Ren J."/>
            <person name="Beausoleil S.A."/>
            <person name="Silva J.C."/>
            <person name="Vemulapalli V."/>
            <person name="Bedford M.T."/>
            <person name="Comb M.J."/>
        </authorList>
    </citation>
    <scope>METHYLATION [LARGE SCALE ANALYSIS] AT ARG-29</scope>
    <scope>IDENTIFICATION BY MASS SPECTROMETRY [LARGE SCALE ANALYSIS]</scope>
    <source>
        <tissue>Brain</tissue>
        <tissue>Embryo</tissue>
    </source>
</reference>
<protein>
    <recommendedName>
        <fullName>Mitochondrial carrier homolog 1</fullName>
    </recommendedName>
    <alternativeName>
        <fullName>Mitochondrial carrier-like protein 1</fullName>
    </alternativeName>
</protein>
<accession>Q791T5</accession>
<accession>Q3U4W7</accession>
<accession>Q791V6</accession>
<accession>Q8R0T0</accession>
<accession>Q8R1T8</accession>
<accession>Q8R2T2</accession>
<accession>Q9QZA5</accession>
<accession>Q9QZP4</accession>
<keyword id="KW-0025">Alternative splicing</keyword>
<keyword id="KW-0053">Apoptosis</keyword>
<keyword id="KW-0472">Membrane</keyword>
<keyword id="KW-0488">Methylation</keyword>
<keyword id="KW-0496">Mitochondrion</keyword>
<keyword id="KW-1000">Mitochondrion outer membrane</keyword>
<keyword id="KW-1185">Reference proteome</keyword>
<keyword id="KW-0677">Repeat</keyword>
<keyword id="KW-0812">Transmembrane</keyword>
<keyword id="KW-1133">Transmembrane helix</keyword>
<keyword id="KW-0813">Transport</keyword>
<name>MTCH1_MOUSE</name>
<comment type="function">
    <text evidence="1 2">Protein insertase that mediates insertion of transmembrane proteins into the mitochondrial outer membrane (By similarity). Catalyzes insertion of proteins with alpha-helical transmembrane regions, such as signal-anchored, tail-anchored and multi-pass membrane proteins. Does not mediate insertion of beta-barrel transmembrane proteins (By similarity). May play a role in apoptosis (By similarity).</text>
</comment>
<comment type="subunit">
    <text evidence="1">Interacts with PSEN1.</text>
</comment>
<comment type="subcellular location">
    <subcellularLocation>
        <location evidence="1">Mitochondrion outer membrane</location>
        <topology evidence="3">Multi-pass membrane protein</topology>
    </subcellularLocation>
</comment>
<comment type="alternative products">
    <event type="alternative splicing"/>
    <isoform>
        <id>Q791T5-1</id>
        <name>1</name>
        <sequence type="displayed"/>
    </isoform>
    <isoform>
        <id>Q791T5-2</id>
        <name>2</name>
        <sequence type="described" ref="VSP_017883"/>
    </isoform>
</comment>
<comment type="similarity">
    <text evidence="8">Belongs to the mitochondrial carrier (TC 2.A.29) family.</text>
</comment>
<comment type="sequence caution" evidence="8">
    <conflict type="erroneous initiation">
        <sequence resource="EMBL-CDS" id="AAH23135"/>
    </conflict>
</comment>
<comment type="sequence caution" evidence="8">
    <conflict type="erroneous initiation">
        <sequence resource="EMBL-CDS" id="AAH26436"/>
    </conflict>
</comment>
<comment type="sequence caution" evidence="8">
    <conflict type="erroneous initiation">
        <sequence resource="EMBL-CDS" id="AAH27274"/>
    </conflict>
</comment>
<comment type="sequence caution" evidence="8">
    <conflict type="erroneous initiation">
        <sequence resource="EMBL-CDS" id="BAE32313"/>
    </conflict>
</comment>